<reference key="1">
    <citation type="journal article" date="2001" name="J. Bacteriol.">
        <title>Genome sequence and comparative analysis of the solvent-producing bacterium Clostridium acetobutylicum.</title>
        <authorList>
            <person name="Noelling J."/>
            <person name="Breton G."/>
            <person name="Omelchenko M.V."/>
            <person name="Makarova K.S."/>
            <person name="Zeng Q."/>
            <person name="Gibson R."/>
            <person name="Lee H.M."/>
            <person name="Dubois J."/>
            <person name="Qiu D."/>
            <person name="Hitti J."/>
            <person name="Wolf Y.I."/>
            <person name="Tatusov R.L."/>
            <person name="Sabathe F."/>
            <person name="Doucette-Stamm L.A."/>
            <person name="Soucaille P."/>
            <person name="Daly M.J."/>
            <person name="Bennett G.N."/>
            <person name="Koonin E.V."/>
            <person name="Smith D.R."/>
        </authorList>
    </citation>
    <scope>NUCLEOTIDE SEQUENCE [LARGE SCALE GENOMIC DNA]</scope>
    <source>
        <strain>ATCC 824 / DSM 792 / JCM 1419 / IAM 19013 / LMG 5710 / NBRC 13948 / NRRL B-527 / VKM B-1787 / 2291 / W</strain>
    </source>
</reference>
<gene>
    <name evidence="1" type="primary">dxs</name>
    <name type="ordered locus">CA_C2077</name>
</gene>
<name>DXS_CLOAB</name>
<sequence length="619" mass="68976">MYNILDNYEDVDDIKNMSSDELKEFASEIRKFLIDKISKTGGHLASNLGVVELTLSLHKVFNLKKDKIIWDVGHQAYVHKILTGRKDKFDSLKQFNGLSGFPKRNESIYDAFETGHSSTSISAASGIARARDLSKDNYDVIAVIGDGALTGGMALEALNDIGYKKTNVIIILNDNQMSIAKNVGSISKYLNKIRLDPKYNKLKKDVKTKLQRTNIGSEVANSIERIKGGIKQMVVSGMFFEDIGIKYLGPIDGHNIEELTSVISKAKEIKGPVILHVKTQKGKGYSYAEENPNKFHSIGKFNSKTGEALSKPKDTYSKAFGKAMVQMAENNDKIVAITAAMTDGTGLCEFSKKFPQRFFDVGISEQHAVTMAAGLAATGYKPVFAVYSTFLQRAYDQVLHDVCIQKLPVVFAIDRAGIVGEDGETHQGVFDISYLSSIPNMTIMAPKCVEELNYIMNWAVKQNYPIAVRYPKGGNDISDVLAPLKEFRHGKWEILKDGKDVAIVAVGKMVQRAMVVRDELLKYGIDCAIINATFIKPIDKDTLNRFARDNYKFVVIEDNVLHGGIGSLILEHLNDMKFKNDVLNLGFKDEFITHGNIEILYKLYDLDIEGICKRIISFK</sequence>
<protein>
    <recommendedName>
        <fullName evidence="1">1-deoxy-D-xylulose-5-phosphate synthase</fullName>
        <ecNumber evidence="1">2.2.1.7</ecNumber>
    </recommendedName>
    <alternativeName>
        <fullName evidence="1">1-deoxyxylulose-5-phosphate synthase</fullName>
        <shortName evidence="1">DXP synthase</shortName>
        <shortName evidence="1">DXPS</shortName>
    </alternativeName>
</protein>
<evidence type="ECO:0000255" key="1">
    <source>
        <dbReference type="HAMAP-Rule" id="MF_00315"/>
    </source>
</evidence>
<keyword id="KW-0414">Isoprene biosynthesis</keyword>
<keyword id="KW-0460">Magnesium</keyword>
<keyword id="KW-0479">Metal-binding</keyword>
<keyword id="KW-1185">Reference proteome</keyword>
<keyword id="KW-0784">Thiamine biosynthesis</keyword>
<keyword id="KW-0786">Thiamine pyrophosphate</keyword>
<keyword id="KW-0808">Transferase</keyword>
<organism>
    <name type="scientific">Clostridium acetobutylicum (strain ATCC 824 / DSM 792 / JCM 1419 / IAM 19013 / LMG 5710 / NBRC 13948 / NRRL B-527 / VKM B-1787 / 2291 / W)</name>
    <dbReference type="NCBI Taxonomy" id="272562"/>
    <lineage>
        <taxon>Bacteria</taxon>
        <taxon>Bacillati</taxon>
        <taxon>Bacillota</taxon>
        <taxon>Clostridia</taxon>
        <taxon>Eubacteriales</taxon>
        <taxon>Clostridiaceae</taxon>
        <taxon>Clostridium</taxon>
    </lineage>
</organism>
<feature type="chain" id="PRO_0000189105" description="1-deoxy-D-xylulose-5-phosphate synthase">
    <location>
        <begin position="1"/>
        <end position="619"/>
    </location>
</feature>
<feature type="binding site" evidence="1">
    <location>
        <position position="74"/>
    </location>
    <ligand>
        <name>thiamine diphosphate</name>
        <dbReference type="ChEBI" id="CHEBI:58937"/>
    </ligand>
</feature>
<feature type="binding site" evidence="1">
    <location>
        <begin position="115"/>
        <end position="117"/>
    </location>
    <ligand>
        <name>thiamine diphosphate</name>
        <dbReference type="ChEBI" id="CHEBI:58937"/>
    </ligand>
</feature>
<feature type="binding site" evidence="1">
    <location>
        <position position="146"/>
    </location>
    <ligand>
        <name>Mg(2+)</name>
        <dbReference type="ChEBI" id="CHEBI:18420"/>
    </ligand>
</feature>
<feature type="binding site" evidence="1">
    <location>
        <begin position="147"/>
        <end position="148"/>
    </location>
    <ligand>
        <name>thiamine diphosphate</name>
        <dbReference type="ChEBI" id="CHEBI:58937"/>
    </ligand>
</feature>
<feature type="binding site" evidence="1">
    <location>
        <position position="175"/>
    </location>
    <ligand>
        <name>Mg(2+)</name>
        <dbReference type="ChEBI" id="CHEBI:18420"/>
    </ligand>
</feature>
<feature type="binding site" evidence="1">
    <location>
        <position position="175"/>
    </location>
    <ligand>
        <name>thiamine diphosphate</name>
        <dbReference type="ChEBI" id="CHEBI:58937"/>
    </ligand>
</feature>
<feature type="binding site" evidence="1">
    <location>
        <position position="285"/>
    </location>
    <ligand>
        <name>thiamine diphosphate</name>
        <dbReference type="ChEBI" id="CHEBI:58937"/>
    </ligand>
</feature>
<feature type="binding site" evidence="1">
    <location>
        <position position="365"/>
    </location>
    <ligand>
        <name>thiamine diphosphate</name>
        <dbReference type="ChEBI" id="CHEBI:58937"/>
    </ligand>
</feature>
<dbReference type="EC" id="2.2.1.7" evidence="1"/>
<dbReference type="EMBL" id="AE001437">
    <property type="protein sequence ID" value="AAK80036.1"/>
    <property type="molecule type" value="Genomic_DNA"/>
</dbReference>
<dbReference type="PIR" id="A97156">
    <property type="entry name" value="A97156"/>
</dbReference>
<dbReference type="RefSeq" id="NP_348696.1">
    <property type="nucleotide sequence ID" value="NC_003030.1"/>
</dbReference>
<dbReference type="RefSeq" id="WP_010965377.1">
    <property type="nucleotide sequence ID" value="NC_003030.1"/>
</dbReference>
<dbReference type="SMR" id="Q97HD5"/>
<dbReference type="STRING" id="272562.CA_C2077"/>
<dbReference type="GeneID" id="44998559"/>
<dbReference type="KEGG" id="cac:CA_C2077"/>
<dbReference type="PATRIC" id="fig|272562.8.peg.2281"/>
<dbReference type="eggNOG" id="COG1154">
    <property type="taxonomic scope" value="Bacteria"/>
</dbReference>
<dbReference type="HOGENOM" id="CLU_009227_1_4_9"/>
<dbReference type="OrthoDB" id="9803371at2"/>
<dbReference type="UniPathway" id="UPA00064">
    <property type="reaction ID" value="UER00091"/>
</dbReference>
<dbReference type="Proteomes" id="UP000000814">
    <property type="component" value="Chromosome"/>
</dbReference>
<dbReference type="GO" id="GO:0005829">
    <property type="term" value="C:cytosol"/>
    <property type="evidence" value="ECO:0007669"/>
    <property type="project" value="TreeGrafter"/>
</dbReference>
<dbReference type="GO" id="GO:0008661">
    <property type="term" value="F:1-deoxy-D-xylulose-5-phosphate synthase activity"/>
    <property type="evidence" value="ECO:0007669"/>
    <property type="project" value="UniProtKB-UniRule"/>
</dbReference>
<dbReference type="GO" id="GO:0000287">
    <property type="term" value="F:magnesium ion binding"/>
    <property type="evidence" value="ECO:0007669"/>
    <property type="project" value="UniProtKB-UniRule"/>
</dbReference>
<dbReference type="GO" id="GO:0030976">
    <property type="term" value="F:thiamine pyrophosphate binding"/>
    <property type="evidence" value="ECO:0007669"/>
    <property type="project" value="UniProtKB-UniRule"/>
</dbReference>
<dbReference type="GO" id="GO:0052865">
    <property type="term" value="P:1-deoxy-D-xylulose 5-phosphate biosynthetic process"/>
    <property type="evidence" value="ECO:0007669"/>
    <property type="project" value="UniProtKB-UniPathway"/>
</dbReference>
<dbReference type="GO" id="GO:0019288">
    <property type="term" value="P:isopentenyl diphosphate biosynthetic process, methylerythritol 4-phosphate pathway"/>
    <property type="evidence" value="ECO:0007669"/>
    <property type="project" value="TreeGrafter"/>
</dbReference>
<dbReference type="GO" id="GO:0016114">
    <property type="term" value="P:terpenoid biosynthetic process"/>
    <property type="evidence" value="ECO:0007669"/>
    <property type="project" value="UniProtKB-UniRule"/>
</dbReference>
<dbReference type="GO" id="GO:0009228">
    <property type="term" value="P:thiamine biosynthetic process"/>
    <property type="evidence" value="ECO:0007669"/>
    <property type="project" value="UniProtKB-UniRule"/>
</dbReference>
<dbReference type="CDD" id="cd02007">
    <property type="entry name" value="TPP_DXS"/>
    <property type="match status" value="1"/>
</dbReference>
<dbReference type="CDD" id="cd07033">
    <property type="entry name" value="TPP_PYR_DXS_TK_like"/>
    <property type="match status" value="1"/>
</dbReference>
<dbReference type="FunFam" id="3.40.50.970:FF:000005">
    <property type="entry name" value="1-deoxy-D-xylulose-5-phosphate synthase"/>
    <property type="match status" value="1"/>
</dbReference>
<dbReference type="Gene3D" id="3.40.50.920">
    <property type="match status" value="1"/>
</dbReference>
<dbReference type="Gene3D" id="3.40.50.970">
    <property type="match status" value="2"/>
</dbReference>
<dbReference type="HAMAP" id="MF_00315">
    <property type="entry name" value="DXP_synth"/>
    <property type="match status" value="1"/>
</dbReference>
<dbReference type="InterPro" id="IPR005477">
    <property type="entry name" value="Dxylulose-5-P_synthase"/>
</dbReference>
<dbReference type="InterPro" id="IPR029061">
    <property type="entry name" value="THDP-binding"/>
</dbReference>
<dbReference type="InterPro" id="IPR009014">
    <property type="entry name" value="Transketo_C/PFOR_II"/>
</dbReference>
<dbReference type="InterPro" id="IPR005475">
    <property type="entry name" value="Transketolase-like_Pyr-bd"/>
</dbReference>
<dbReference type="InterPro" id="IPR020826">
    <property type="entry name" value="Transketolase_BS"/>
</dbReference>
<dbReference type="InterPro" id="IPR033248">
    <property type="entry name" value="Transketolase_C"/>
</dbReference>
<dbReference type="InterPro" id="IPR049557">
    <property type="entry name" value="Transketolase_CS"/>
</dbReference>
<dbReference type="NCBIfam" id="TIGR00204">
    <property type="entry name" value="dxs"/>
    <property type="match status" value="1"/>
</dbReference>
<dbReference type="NCBIfam" id="NF003933">
    <property type="entry name" value="PRK05444.2-2"/>
    <property type="match status" value="1"/>
</dbReference>
<dbReference type="PANTHER" id="PTHR43322">
    <property type="entry name" value="1-D-DEOXYXYLULOSE 5-PHOSPHATE SYNTHASE-RELATED"/>
    <property type="match status" value="1"/>
</dbReference>
<dbReference type="PANTHER" id="PTHR43322:SF5">
    <property type="entry name" value="1-DEOXY-D-XYLULOSE-5-PHOSPHATE SYNTHASE, CHLOROPLASTIC"/>
    <property type="match status" value="1"/>
</dbReference>
<dbReference type="Pfam" id="PF13292">
    <property type="entry name" value="DXP_synthase_N"/>
    <property type="match status" value="1"/>
</dbReference>
<dbReference type="Pfam" id="PF02779">
    <property type="entry name" value="Transket_pyr"/>
    <property type="match status" value="1"/>
</dbReference>
<dbReference type="Pfam" id="PF02780">
    <property type="entry name" value="Transketolase_C"/>
    <property type="match status" value="1"/>
</dbReference>
<dbReference type="SMART" id="SM00861">
    <property type="entry name" value="Transket_pyr"/>
    <property type="match status" value="1"/>
</dbReference>
<dbReference type="SUPFAM" id="SSF52518">
    <property type="entry name" value="Thiamin diphosphate-binding fold (THDP-binding)"/>
    <property type="match status" value="2"/>
</dbReference>
<dbReference type="SUPFAM" id="SSF52922">
    <property type="entry name" value="TK C-terminal domain-like"/>
    <property type="match status" value="1"/>
</dbReference>
<dbReference type="PROSITE" id="PS00801">
    <property type="entry name" value="TRANSKETOLASE_1"/>
    <property type="match status" value="1"/>
</dbReference>
<dbReference type="PROSITE" id="PS00802">
    <property type="entry name" value="TRANSKETOLASE_2"/>
    <property type="match status" value="1"/>
</dbReference>
<accession>Q97HD5</accession>
<comment type="function">
    <text evidence="1">Catalyzes the acyloin condensation reaction between C atoms 2 and 3 of pyruvate and glyceraldehyde 3-phosphate to yield 1-deoxy-D-xylulose-5-phosphate (DXP).</text>
</comment>
<comment type="catalytic activity">
    <reaction evidence="1">
        <text>D-glyceraldehyde 3-phosphate + pyruvate + H(+) = 1-deoxy-D-xylulose 5-phosphate + CO2</text>
        <dbReference type="Rhea" id="RHEA:12605"/>
        <dbReference type="ChEBI" id="CHEBI:15361"/>
        <dbReference type="ChEBI" id="CHEBI:15378"/>
        <dbReference type="ChEBI" id="CHEBI:16526"/>
        <dbReference type="ChEBI" id="CHEBI:57792"/>
        <dbReference type="ChEBI" id="CHEBI:59776"/>
        <dbReference type="EC" id="2.2.1.7"/>
    </reaction>
</comment>
<comment type="cofactor">
    <cofactor evidence="1">
        <name>Mg(2+)</name>
        <dbReference type="ChEBI" id="CHEBI:18420"/>
    </cofactor>
    <text evidence="1">Binds 1 Mg(2+) ion per subunit.</text>
</comment>
<comment type="cofactor">
    <cofactor evidence="1">
        <name>thiamine diphosphate</name>
        <dbReference type="ChEBI" id="CHEBI:58937"/>
    </cofactor>
    <text evidence="1">Binds 1 thiamine pyrophosphate per subunit.</text>
</comment>
<comment type="pathway">
    <text evidence="1">Metabolic intermediate biosynthesis; 1-deoxy-D-xylulose 5-phosphate biosynthesis; 1-deoxy-D-xylulose 5-phosphate from D-glyceraldehyde 3-phosphate and pyruvate: step 1/1.</text>
</comment>
<comment type="subunit">
    <text evidence="1">Homodimer.</text>
</comment>
<comment type="similarity">
    <text evidence="1">Belongs to the transketolase family. DXPS subfamily.</text>
</comment>
<proteinExistence type="inferred from homology"/>